<accession>B2HFV6</accession>
<keyword id="KW-0068">Autocatalytic cleavage</keyword>
<keyword id="KW-0963">Cytoplasm</keyword>
<keyword id="KW-0378">Hydrolase</keyword>
<keyword id="KW-0645">Protease</keyword>
<keyword id="KW-0647">Proteasome</keyword>
<keyword id="KW-1185">Reference proteome</keyword>
<keyword id="KW-0888">Threonine protease</keyword>
<keyword id="KW-0865">Zymogen</keyword>
<gene>
    <name evidence="1" type="primary">prcB</name>
    <name type="ordered locus">MMAR_3085</name>
</gene>
<evidence type="ECO:0000255" key="1">
    <source>
        <dbReference type="HAMAP-Rule" id="MF_02113"/>
    </source>
</evidence>
<dbReference type="EC" id="3.4.25.1" evidence="1"/>
<dbReference type="EMBL" id="CP000854">
    <property type="protein sequence ID" value="ACC41520.1"/>
    <property type="molecule type" value="Genomic_DNA"/>
</dbReference>
<dbReference type="RefSeq" id="WP_011740318.1">
    <property type="nucleotide sequence ID" value="NC_010612.1"/>
</dbReference>
<dbReference type="SMR" id="B2HFV6"/>
<dbReference type="STRING" id="216594.MMAR_3085"/>
<dbReference type="MEROPS" id="T01.005"/>
<dbReference type="GeneID" id="93437179"/>
<dbReference type="KEGG" id="mmi:MMAR_3085"/>
<dbReference type="eggNOG" id="COG0638">
    <property type="taxonomic scope" value="Bacteria"/>
</dbReference>
<dbReference type="HOGENOM" id="CLU_035750_2_0_11"/>
<dbReference type="OrthoDB" id="5174038at2"/>
<dbReference type="UniPathway" id="UPA00997"/>
<dbReference type="Proteomes" id="UP000001190">
    <property type="component" value="Chromosome"/>
</dbReference>
<dbReference type="GO" id="GO:0005737">
    <property type="term" value="C:cytoplasm"/>
    <property type="evidence" value="ECO:0007669"/>
    <property type="project" value="UniProtKB-SubCell"/>
</dbReference>
<dbReference type="GO" id="GO:0019774">
    <property type="term" value="C:proteasome core complex, beta-subunit complex"/>
    <property type="evidence" value="ECO:0007669"/>
    <property type="project" value="UniProtKB-UniRule"/>
</dbReference>
<dbReference type="GO" id="GO:0004298">
    <property type="term" value="F:threonine-type endopeptidase activity"/>
    <property type="evidence" value="ECO:0007669"/>
    <property type="project" value="UniProtKB-UniRule"/>
</dbReference>
<dbReference type="GO" id="GO:0019941">
    <property type="term" value="P:modification-dependent protein catabolic process"/>
    <property type="evidence" value="ECO:0007669"/>
    <property type="project" value="UniProtKB-UniRule"/>
</dbReference>
<dbReference type="GO" id="GO:0010498">
    <property type="term" value="P:proteasomal protein catabolic process"/>
    <property type="evidence" value="ECO:0007669"/>
    <property type="project" value="UniProtKB-UniRule"/>
</dbReference>
<dbReference type="CDD" id="cd01906">
    <property type="entry name" value="proteasome_protease_HslV"/>
    <property type="match status" value="1"/>
</dbReference>
<dbReference type="FunFam" id="3.60.20.10:FF:000046">
    <property type="entry name" value="Proteasome subunit beta"/>
    <property type="match status" value="1"/>
</dbReference>
<dbReference type="Gene3D" id="3.60.20.10">
    <property type="entry name" value="Glutamine Phosphoribosylpyrophosphate, subunit 1, domain 1"/>
    <property type="match status" value="1"/>
</dbReference>
<dbReference type="HAMAP" id="MF_02113_B">
    <property type="entry name" value="Proteasome_B_B"/>
    <property type="match status" value="1"/>
</dbReference>
<dbReference type="InterPro" id="IPR029055">
    <property type="entry name" value="Ntn_hydrolases_N"/>
</dbReference>
<dbReference type="InterPro" id="IPR001353">
    <property type="entry name" value="Proteasome_sua/b"/>
</dbReference>
<dbReference type="InterPro" id="IPR023333">
    <property type="entry name" value="Proteasome_suB-type"/>
</dbReference>
<dbReference type="InterPro" id="IPR022483">
    <property type="entry name" value="PSB_actinobac"/>
</dbReference>
<dbReference type="NCBIfam" id="TIGR03690">
    <property type="entry name" value="20S_bact_beta"/>
    <property type="match status" value="1"/>
</dbReference>
<dbReference type="PANTHER" id="PTHR32194:SF0">
    <property type="entry name" value="ATP-DEPENDENT PROTEASE SUBUNIT HSLV"/>
    <property type="match status" value="1"/>
</dbReference>
<dbReference type="PANTHER" id="PTHR32194">
    <property type="entry name" value="METALLOPROTEASE TLDD"/>
    <property type="match status" value="1"/>
</dbReference>
<dbReference type="Pfam" id="PF00227">
    <property type="entry name" value="Proteasome"/>
    <property type="match status" value="1"/>
</dbReference>
<dbReference type="SUPFAM" id="SSF56235">
    <property type="entry name" value="N-terminal nucleophile aminohydrolases (Ntn hydrolases)"/>
    <property type="match status" value="1"/>
</dbReference>
<dbReference type="PROSITE" id="PS51476">
    <property type="entry name" value="PROTEASOME_BETA_2"/>
    <property type="match status" value="1"/>
</dbReference>
<organism>
    <name type="scientific">Mycobacterium marinum (strain ATCC BAA-535 / M)</name>
    <dbReference type="NCBI Taxonomy" id="216594"/>
    <lineage>
        <taxon>Bacteria</taxon>
        <taxon>Bacillati</taxon>
        <taxon>Actinomycetota</taxon>
        <taxon>Actinomycetes</taxon>
        <taxon>Mycobacteriales</taxon>
        <taxon>Mycobacteriaceae</taxon>
        <taxon>Mycobacterium</taxon>
        <taxon>Mycobacterium ulcerans group</taxon>
    </lineage>
</organism>
<proteinExistence type="inferred from homology"/>
<name>PSB_MYCMM</name>
<feature type="propeptide" id="PRO_0000397536" description="Removed in mature form; by autocatalysis" evidence="1">
    <location>
        <begin position="1"/>
        <end position="55"/>
    </location>
</feature>
<feature type="chain" id="PRO_0000397537" description="Proteasome subunit beta">
    <location>
        <begin position="56"/>
        <end position="289"/>
    </location>
</feature>
<feature type="active site" description="Nucleophile" evidence="1">
    <location>
        <position position="56"/>
    </location>
</feature>
<sequence length="289" mass="30302">MTWPLPDRLSINSAISGSAVDLSSFAEFLRRQAPELLPASIKHGGGAVGDQLPHATTIVALKYPGGVLIAGDRRSTQGNMIAGRDVRKVYITDDYTATGIAGTAAIAVEFARLYAVELEHYEKLEGVPLTFAGKVNRLAIMVRGNLAAAMQGLVALPLLASYDIHASDPRSAGRIVSFDAAGGWNIEEEGYQAVGSGSIFAKSSIKKLYAQVTDADSALRVAVEALYDAADDDSATGGPDLVRGIYPTAVTINADGAVDVPEVRIAELAREVIGSRSRADTFGPDGGEK</sequence>
<protein>
    <recommendedName>
        <fullName evidence="1">Proteasome subunit beta</fullName>
        <ecNumber evidence="1">3.4.25.1</ecNumber>
    </recommendedName>
    <alternativeName>
        <fullName evidence="1">20S proteasome beta subunit</fullName>
    </alternativeName>
    <alternativeName>
        <fullName evidence="1">Proteasome core protein PrcB</fullName>
    </alternativeName>
</protein>
<reference key="1">
    <citation type="journal article" date="2008" name="Genome Res.">
        <title>Insights from the complete genome sequence of Mycobacterium marinum on the evolution of Mycobacterium tuberculosis.</title>
        <authorList>
            <person name="Stinear T.P."/>
            <person name="Seemann T."/>
            <person name="Harrison P.F."/>
            <person name="Jenkin G.A."/>
            <person name="Davies J.K."/>
            <person name="Johnson P.D."/>
            <person name="Abdellah Z."/>
            <person name="Arrowsmith C."/>
            <person name="Chillingworth T."/>
            <person name="Churcher C."/>
            <person name="Clarke K."/>
            <person name="Cronin A."/>
            <person name="Davis P."/>
            <person name="Goodhead I."/>
            <person name="Holroyd N."/>
            <person name="Jagels K."/>
            <person name="Lord A."/>
            <person name="Moule S."/>
            <person name="Mungall K."/>
            <person name="Norbertczak H."/>
            <person name="Quail M.A."/>
            <person name="Rabbinowitsch E."/>
            <person name="Walker D."/>
            <person name="White B."/>
            <person name="Whitehead S."/>
            <person name="Small P.L."/>
            <person name="Brosch R."/>
            <person name="Ramakrishnan L."/>
            <person name="Fischbach M.A."/>
            <person name="Parkhill J."/>
            <person name="Cole S.T."/>
        </authorList>
    </citation>
    <scope>NUCLEOTIDE SEQUENCE [LARGE SCALE GENOMIC DNA]</scope>
    <source>
        <strain>ATCC BAA-535 / M</strain>
    </source>
</reference>
<comment type="function">
    <text evidence="1">Component of the proteasome core, a large protease complex with broad specificity involved in protein degradation.</text>
</comment>
<comment type="catalytic activity">
    <reaction evidence="1">
        <text>Cleavage of peptide bonds with very broad specificity.</text>
        <dbReference type="EC" id="3.4.25.1"/>
    </reaction>
</comment>
<comment type="activity regulation">
    <text evidence="1">The formation of the proteasomal ATPase ARC-20S proteasome complex, likely via the docking of the C-termini of ARC into the intersubunit pockets in the alpha-rings, may trigger opening of the gate for substrate entry. Interconversion between the open-gate and close-gate conformations leads to a dynamic regulation of the 20S proteasome proteolysis activity.</text>
</comment>
<comment type="pathway">
    <text evidence="1">Protein degradation; proteasomal Pup-dependent pathway.</text>
</comment>
<comment type="subunit">
    <text evidence="1">The 20S proteasome core is composed of 14 alpha and 14 beta subunits that assemble into four stacked heptameric rings, resulting in a barrel-shaped structure. The two inner rings, each composed of seven catalytic beta subunits, are sandwiched by two outer rings, each composed of seven alpha subunits. The catalytic chamber with the active sites is on the inside of the barrel. Has a gated structure, the ends of the cylinder being occluded by the N-termini of the alpha-subunits. Is capped by the proteasome-associated ATPase, ARC.</text>
</comment>
<comment type="subcellular location">
    <subcellularLocation>
        <location evidence="1">Cytoplasm</location>
    </subcellularLocation>
</comment>
<comment type="similarity">
    <text evidence="1">Belongs to the peptidase T1B family.</text>
</comment>